<accession>H8ZW44</accession>
<evidence type="ECO:0000250" key="1">
    <source>
        <dbReference type="UniProtKB" id="P45568"/>
    </source>
</evidence>
<evidence type="ECO:0000250" key="2">
    <source>
        <dbReference type="UniProtKB" id="Q9XFS9"/>
    </source>
</evidence>
<evidence type="ECO:0000303" key="3">
    <source>
    </source>
</evidence>
<evidence type="ECO:0000305" key="4"/>
<evidence type="ECO:0000312" key="5">
    <source>
        <dbReference type="EMBL" id="AFD50369.1"/>
    </source>
</evidence>
<organism>
    <name type="scientific">Origanum vulgare</name>
    <name type="common">Wild marjoram</name>
    <dbReference type="NCBI Taxonomy" id="39352"/>
    <lineage>
        <taxon>Eukaryota</taxon>
        <taxon>Viridiplantae</taxon>
        <taxon>Streptophyta</taxon>
        <taxon>Embryophyta</taxon>
        <taxon>Tracheophyta</taxon>
        <taxon>Spermatophyta</taxon>
        <taxon>Magnoliopsida</taxon>
        <taxon>eudicotyledons</taxon>
        <taxon>Gunneridae</taxon>
        <taxon>Pentapetalae</taxon>
        <taxon>asterids</taxon>
        <taxon>lamiids</taxon>
        <taxon>Lamiales</taxon>
        <taxon>Lamiaceae</taxon>
        <taxon>Nepetoideae</taxon>
        <taxon>Mentheae</taxon>
        <taxon>Origanum</taxon>
    </lineage>
</organism>
<dbReference type="EC" id="1.1.1.267" evidence="1"/>
<dbReference type="EMBL" id="JN587739">
    <property type="protein sequence ID" value="AFD50369.1"/>
    <property type="molecule type" value="Genomic_DNA"/>
</dbReference>
<dbReference type="SMR" id="H8ZW44"/>
<dbReference type="UniPathway" id="UPA00056">
    <property type="reaction ID" value="UER00092"/>
</dbReference>
<dbReference type="GO" id="GO:0009570">
    <property type="term" value="C:chloroplast stroma"/>
    <property type="evidence" value="ECO:0007669"/>
    <property type="project" value="UniProtKB-SubCell"/>
</dbReference>
<dbReference type="GO" id="GO:0030604">
    <property type="term" value="F:1-deoxy-D-xylulose-5-phosphate reductoisomerase activity"/>
    <property type="evidence" value="ECO:0007669"/>
    <property type="project" value="InterPro"/>
</dbReference>
<dbReference type="GO" id="GO:0016853">
    <property type="term" value="F:isomerase activity"/>
    <property type="evidence" value="ECO:0007669"/>
    <property type="project" value="UniProtKB-KW"/>
</dbReference>
<dbReference type="GO" id="GO:0030145">
    <property type="term" value="F:manganese ion binding"/>
    <property type="evidence" value="ECO:0007669"/>
    <property type="project" value="TreeGrafter"/>
</dbReference>
<dbReference type="GO" id="GO:0070402">
    <property type="term" value="F:NADPH binding"/>
    <property type="evidence" value="ECO:0007669"/>
    <property type="project" value="TreeGrafter"/>
</dbReference>
<dbReference type="GO" id="GO:0051484">
    <property type="term" value="P:isopentenyl diphosphate biosynthetic process, methylerythritol 4-phosphate pathway involved in terpenoid biosynthetic process"/>
    <property type="evidence" value="ECO:0007669"/>
    <property type="project" value="TreeGrafter"/>
</dbReference>
<dbReference type="InterPro" id="IPR003821">
    <property type="entry name" value="DXP_reductoisomerase"/>
</dbReference>
<dbReference type="InterPro" id="IPR013644">
    <property type="entry name" value="DXP_reductoisomerase_C"/>
</dbReference>
<dbReference type="PANTHER" id="PTHR30525">
    <property type="entry name" value="1-DEOXY-D-XYLULOSE 5-PHOSPHATE REDUCTOISOMERASE"/>
    <property type="match status" value="1"/>
</dbReference>
<dbReference type="PANTHER" id="PTHR30525:SF0">
    <property type="entry name" value="1-DEOXY-D-XYLULOSE 5-PHOSPHATE REDUCTOISOMERASE, CHLOROPLASTIC"/>
    <property type="match status" value="1"/>
</dbReference>
<dbReference type="Pfam" id="PF08436">
    <property type="entry name" value="DXP_redisom_C"/>
    <property type="match status" value="1"/>
</dbReference>
<dbReference type="SUPFAM" id="SSF55347">
    <property type="entry name" value="Glyceraldehyde-3-phosphate dehydrogenase-like, C-terminal domain"/>
    <property type="match status" value="1"/>
</dbReference>
<reference key="1">
    <citation type="journal article" date="2012" name="Mol. Phylogenet. Evol.">
        <title>Development of phylogenetic markers from single-copy nuclear genes for multi locus, species level analyses in the mint family (Lamiaceae).</title>
        <authorList>
            <person name="Curto M.A."/>
            <person name="Puppo P."/>
            <person name="Ferreira D."/>
            <person name="Nogueira M."/>
            <person name="Meimberg H."/>
        </authorList>
    </citation>
    <scope>NUCLEOTIDE SEQUENCE [GENOMIC DNA]</scope>
    <source>
        <strain>cv. LNIV008</strain>
    </source>
</reference>
<proteinExistence type="inferred from homology"/>
<sequence>PADSEHSAIFQCIQGLPEGALRRIILTASGGAFRDLPVEKLKEVKVADALKHPNWNMGKKITVDSATLFNKGLEVIEAHYLFGAEYDDIEIVIHPQSIIHSMVETQ</sequence>
<name>DXR_ORIVU</name>
<protein>
    <recommendedName>
        <fullName evidence="3">1-deoxy-D-xylulose 5-phosphate reductoisomerase</fullName>
        <ecNumber evidence="1">1.1.1.267</ecNumber>
    </recommendedName>
</protein>
<gene>
    <name evidence="3" type="primary">DXR</name>
</gene>
<comment type="function">
    <text evidence="2">Enzyme of the plastid non-mevalonate pathway for isoprenoid biosynthesis that catalyzes the NADPH-dependent rearrangement and reduction of 1-deoxy-D-xylulose-5-phosphate (DXP) to 2-C-methyl-D-erythritol 4-phosphate (MEP). Required for chloroplast development.</text>
</comment>
<comment type="catalytic activity">
    <reaction evidence="1">
        <text>2-C-methyl-D-erythritol 4-phosphate + NADP(+) = 1-deoxy-D-xylulose 5-phosphate + NADPH + H(+)</text>
        <dbReference type="Rhea" id="RHEA:13717"/>
        <dbReference type="ChEBI" id="CHEBI:15378"/>
        <dbReference type="ChEBI" id="CHEBI:57783"/>
        <dbReference type="ChEBI" id="CHEBI:57792"/>
        <dbReference type="ChEBI" id="CHEBI:58262"/>
        <dbReference type="ChEBI" id="CHEBI:58349"/>
        <dbReference type="EC" id="1.1.1.267"/>
    </reaction>
    <physiologicalReaction direction="right-to-left" evidence="1">
        <dbReference type="Rhea" id="RHEA:13719"/>
    </physiologicalReaction>
</comment>
<comment type="cofactor">
    <cofactor evidence="1">
        <name>Mn(2+)</name>
        <dbReference type="ChEBI" id="CHEBI:29035"/>
    </cofactor>
    <cofactor evidence="1">
        <name>Mg(2+)</name>
        <dbReference type="ChEBI" id="CHEBI:18420"/>
    </cofactor>
</comment>
<comment type="pathway">
    <text evidence="4">Isoprenoid biosynthesis; isopentenyl diphosphate biosynthesis via DXP pathway; isopentenyl diphosphate from 1-deoxy-D-xylulose 5-phosphate: step 1/6.</text>
</comment>
<comment type="subcellular location">
    <subcellularLocation>
        <location evidence="2">Plastid</location>
        <location evidence="2">Chloroplast stroma</location>
    </subcellularLocation>
</comment>
<comment type="similarity">
    <text evidence="4">Belongs to the DXR family.</text>
</comment>
<keyword id="KW-0150">Chloroplast</keyword>
<keyword id="KW-0413">Isomerase</keyword>
<keyword id="KW-0479">Metal-binding</keyword>
<keyword id="KW-0560">Oxidoreductase</keyword>
<keyword id="KW-0934">Plastid</keyword>
<feature type="chain" id="PRO_0000453305" description="1-deoxy-D-xylulose 5-phosphate reductoisomerase">
    <location>
        <begin position="1" status="less than"/>
        <end position="106" status="greater than"/>
    </location>
</feature>
<feature type="binding site" evidence="1">
    <location>
        <position position="3"/>
    </location>
    <ligand>
        <name>Mn(2+)</name>
        <dbReference type="ChEBI" id="CHEBI:29035"/>
    </ligand>
</feature>
<feature type="binding site" evidence="1">
    <location>
        <position position="4"/>
    </location>
    <ligand>
        <name>1-deoxy-D-xylulose 5-phosphate</name>
        <dbReference type="ChEBI" id="CHEBI:57792"/>
    </ligand>
</feature>
<feature type="binding site" evidence="1">
    <location>
        <position position="5"/>
    </location>
    <ligand>
        <name>1-deoxy-D-xylulose 5-phosphate</name>
        <dbReference type="ChEBI" id="CHEBI:57792"/>
    </ligand>
</feature>
<feature type="binding site" evidence="1">
    <location>
        <position position="5"/>
    </location>
    <ligand>
        <name>Mn(2+)</name>
        <dbReference type="ChEBI" id="CHEBI:29035"/>
    </ligand>
</feature>
<feature type="binding site" evidence="1">
    <location>
        <position position="29"/>
    </location>
    <ligand>
        <name>1-deoxy-D-xylulose 5-phosphate</name>
        <dbReference type="ChEBI" id="CHEBI:57792"/>
    </ligand>
</feature>
<feature type="binding site" evidence="1">
    <location>
        <position position="52"/>
    </location>
    <ligand>
        <name>1-deoxy-D-xylulose 5-phosphate</name>
        <dbReference type="ChEBI" id="CHEBI:57792"/>
    </ligand>
</feature>
<feature type="binding site" evidence="1">
    <location>
        <position position="65"/>
    </location>
    <ligand>
        <name>1-deoxy-D-xylulose 5-phosphate</name>
        <dbReference type="ChEBI" id="CHEBI:57792"/>
    </ligand>
</feature>
<feature type="binding site" evidence="1">
    <location>
        <position position="70"/>
    </location>
    <ligand>
        <name>1-deoxy-D-xylulose 5-phosphate</name>
        <dbReference type="ChEBI" id="CHEBI:57792"/>
    </ligand>
</feature>
<feature type="binding site" evidence="1">
    <location>
        <position position="71"/>
    </location>
    <ligand>
        <name>1-deoxy-D-xylulose 5-phosphate</name>
        <dbReference type="ChEBI" id="CHEBI:57792"/>
    </ligand>
</feature>
<feature type="binding site" evidence="1">
    <location>
        <position position="74"/>
    </location>
    <ligand>
        <name>1-deoxy-D-xylulose 5-phosphate</name>
        <dbReference type="ChEBI" id="CHEBI:57792"/>
    </ligand>
</feature>
<feature type="binding site" evidence="1">
    <location>
        <position position="74"/>
    </location>
    <ligand>
        <name>Mn(2+)</name>
        <dbReference type="ChEBI" id="CHEBI:29035"/>
    </ligand>
</feature>
<feature type="non-terminal residue" evidence="5">
    <location>
        <position position="1"/>
    </location>
</feature>
<feature type="non-terminal residue" evidence="5">
    <location>
        <position position="106"/>
    </location>
</feature>